<proteinExistence type="inferred from homology"/>
<reference key="1">
    <citation type="journal article" date="2006" name="Nature">
        <title>Analysis of the DNA sequence and duplication history of human chromosome 15.</title>
        <authorList>
            <person name="Zody M.C."/>
            <person name="Garber M."/>
            <person name="Sharpe T."/>
            <person name="Young S.K."/>
            <person name="Rowen L."/>
            <person name="O'Neill K."/>
            <person name="Whittaker C.A."/>
            <person name="Kamal M."/>
            <person name="Chang J.L."/>
            <person name="Cuomo C.A."/>
            <person name="Dewar K."/>
            <person name="FitzGerald M.G."/>
            <person name="Kodira C.D."/>
            <person name="Madan A."/>
            <person name="Qin S."/>
            <person name="Yang X."/>
            <person name="Abbasi N."/>
            <person name="Abouelleil A."/>
            <person name="Arachchi H.M."/>
            <person name="Baradarani L."/>
            <person name="Birditt B."/>
            <person name="Bloom S."/>
            <person name="Bloom T."/>
            <person name="Borowsky M.L."/>
            <person name="Burke J."/>
            <person name="Butler J."/>
            <person name="Cook A."/>
            <person name="DeArellano K."/>
            <person name="DeCaprio D."/>
            <person name="Dorris L. III"/>
            <person name="Dors M."/>
            <person name="Eichler E.E."/>
            <person name="Engels R."/>
            <person name="Fahey J."/>
            <person name="Fleetwood P."/>
            <person name="Friedman C."/>
            <person name="Gearin G."/>
            <person name="Hall J.L."/>
            <person name="Hensley G."/>
            <person name="Johnson E."/>
            <person name="Jones C."/>
            <person name="Kamat A."/>
            <person name="Kaur A."/>
            <person name="Locke D.P."/>
            <person name="Madan A."/>
            <person name="Munson G."/>
            <person name="Jaffe D.B."/>
            <person name="Lui A."/>
            <person name="Macdonald P."/>
            <person name="Mauceli E."/>
            <person name="Naylor J.W."/>
            <person name="Nesbitt R."/>
            <person name="Nicol R."/>
            <person name="O'Leary S.B."/>
            <person name="Ratcliffe A."/>
            <person name="Rounsley S."/>
            <person name="She X."/>
            <person name="Sneddon K.M.B."/>
            <person name="Stewart S."/>
            <person name="Sougnez C."/>
            <person name="Stone S.M."/>
            <person name="Topham K."/>
            <person name="Vincent D."/>
            <person name="Wang S."/>
            <person name="Zimmer A.R."/>
            <person name="Birren B.W."/>
            <person name="Hood L."/>
            <person name="Lander E.S."/>
            <person name="Nusbaum C."/>
        </authorList>
    </citation>
    <scope>NUCLEOTIDE SEQUENCE [LARGE SCALE GENOMIC DNA]</scope>
</reference>
<keyword id="KW-1015">Disulfide bond</keyword>
<keyword id="KW-0297">G-protein coupled receptor</keyword>
<keyword id="KW-0472">Membrane</keyword>
<keyword id="KW-0675">Receptor</keyword>
<keyword id="KW-1185">Reference proteome</keyword>
<keyword id="KW-0807">Transducer</keyword>
<keyword id="KW-0812">Transmembrane</keyword>
<keyword id="KW-1133">Transmembrane helix</keyword>
<gene>
    <name evidence="4" type="primary">OR4M2B</name>
</gene>
<sequence length="313" mass="35403">METANYTKVTEFVLTGLSQTPEVQLVLFVIFLSFYLFILPGNILIICTISLDPHLTSPMYFLLANLAFLDIWYSSITAPEMLIDFFVERKIISFDECIAQLFFLHFAGASEMFLLTVMAFDLYTAICRPLHYATIMNQRLCCILVALSWRGGFIHSIIQVALIVRLPFCGPNELDSYFCDITQVVRIACANTFPEELVMICSSGLISVVCLIALLMSYAFLLALLKKLSGSGENTNRAVSTCYSHITIVVLMFGPSIYIYARPFDSFSLDKVVSVFNTLIFPLHNPIIYTLRNKEVKAAMRKLVTKYILCKEK</sequence>
<organism>
    <name type="scientific">Homo sapiens</name>
    <name type="common">Human</name>
    <dbReference type="NCBI Taxonomy" id="9606"/>
    <lineage>
        <taxon>Eukaryota</taxon>
        <taxon>Metazoa</taxon>
        <taxon>Chordata</taxon>
        <taxon>Craniata</taxon>
        <taxon>Vertebrata</taxon>
        <taxon>Euteleostomi</taxon>
        <taxon>Mammalia</taxon>
        <taxon>Eutheria</taxon>
        <taxon>Euarchontoglires</taxon>
        <taxon>Primates</taxon>
        <taxon>Haplorrhini</taxon>
        <taxon>Catarrhini</taxon>
        <taxon>Hominidae</taxon>
        <taxon>Homo</taxon>
    </lineage>
</organism>
<name>ORM2B_HUMAN</name>
<dbReference type="EMBL" id="AC135068">
    <property type="status" value="NOT_ANNOTATED_CDS"/>
    <property type="molecule type" value="Genomic_DNA"/>
</dbReference>
<dbReference type="CCDS" id="CCDS91960.1"/>
<dbReference type="RefSeq" id="NP_001382225.1">
    <property type="nucleotide sequence ID" value="NM_001395296.1"/>
</dbReference>
<dbReference type="SMR" id="A0A0X1KG70"/>
<dbReference type="BioMuta" id="ENSG00000182974"/>
<dbReference type="PaxDb" id="9606-ENSP00000329467"/>
<dbReference type="Antibodypedia" id="22170">
    <property type="antibodies" value="20 antibodies from 6 providers"/>
</dbReference>
<dbReference type="Ensembl" id="ENST00000332663.3">
    <property type="protein sequence ID" value="ENSP00000329467.3"/>
    <property type="gene ID" value="ENSG00000182974.3"/>
</dbReference>
<dbReference type="Ensembl" id="ENST00000671884.2">
    <property type="protein sequence ID" value="ENSP00000500188.1"/>
    <property type="gene ID" value="ENSG00000288469.2"/>
</dbReference>
<dbReference type="GeneID" id="118568804"/>
<dbReference type="MANE-Select" id="ENST00000332663.3">
    <property type="protein sequence ID" value="ENSP00000329467.3"/>
    <property type="RefSeq nucleotide sequence ID" value="NM_001395296.1"/>
    <property type="RefSeq protein sequence ID" value="NP_001382225.1"/>
</dbReference>
<dbReference type="AGR" id="HGNC:55109"/>
<dbReference type="GeneCards" id="OR4M2B"/>
<dbReference type="HGNC" id="HGNC:55109">
    <property type="gene designation" value="OR4M2B"/>
</dbReference>
<dbReference type="HPA" id="ENSG00000182974">
    <property type="expression patterns" value="Not detected"/>
</dbReference>
<dbReference type="neXtProt" id="NX_A0A0X1KG70"/>
<dbReference type="VEuPathDB" id="HostDB:ENSG00000182974"/>
<dbReference type="eggNOG" id="ENOG502SKDS">
    <property type="taxonomic scope" value="Eukaryota"/>
</dbReference>
<dbReference type="GeneTree" id="ENSGT00940000163142"/>
<dbReference type="InParanoid" id="A0A0X1KG70"/>
<dbReference type="OrthoDB" id="6130476at2759"/>
<dbReference type="PAN-GO" id="A0A0X1KG70">
    <property type="GO annotations" value="2 GO annotations based on evolutionary models"/>
</dbReference>
<dbReference type="PRO" id="PR:A0A0X1KG70"/>
<dbReference type="Proteomes" id="UP000005640">
    <property type="component" value="Chromosome 15"/>
</dbReference>
<dbReference type="RNAct" id="A0A0X1KG70">
    <property type="molecule type" value="protein"/>
</dbReference>
<dbReference type="Bgee" id="ENSG00000182974">
    <property type="expression patterns" value="Expressed in male germ line stem cell (sensu Vertebrata) in testis and 3 other cell types or tissues"/>
</dbReference>
<dbReference type="GO" id="GO:0005886">
    <property type="term" value="C:plasma membrane"/>
    <property type="evidence" value="ECO:0000318"/>
    <property type="project" value="GO_Central"/>
</dbReference>
<dbReference type="GO" id="GO:0004930">
    <property type="term" value="F:G protein-coupled receptor activity"/>
    <property type="evidence" value="ECO:0007669"/>
    <property type="project" value="UniProtKB-KW"/>
</dbReference>
<dbReference type="GO" id="GO:0004984">
    <property type="term" value="F:olfactory receptor activity"/>
    <property type="evidence" value="ECO:0000318"/>
    <property type="project" value="GO_Central"/>
</dbReference>
<dbReference type="FunFam" id="1.20.1070.10:FF:000012">
    <property type="entry name" value="Olfactory receptor"/>
    <property type="match status" value="1"/>
</dbReference>
<dbReference type="Gene3D" id="1.20.1070.10">
    <property type="entry name" value="Rhodopsin 7-helix transmembrane proteins"/>
    <property type="match status" value="1"/>
</dbReference>
<dbReference type="InterPro" id="IPR000276">
    <property type="entry name" value="GPCR_Rhodpsn"/>
</dbReference>
<dbReference type="InterPro" id="IPR017452">
    <property type="entry name" value="GPCR_Rhodpsn_7TM"/>
</dbReference>
<dbReference type="InterPro" id="IPR000725">
    <property type="entry name" value="Olfact_rcpt"/>
</dbReference>
<dbReference type="InterPro" id="IPR050427">
    <property type="entry name" value="Olfactory_Receptors"/>
</dbReference>
<dbReference type="PANTHER" id="PTHR48002">
    <property type="entry name" value="OLFACTORY RECEPTOR"/>
    <property type="match status" value="1"/>
</dbReference>
<dbReference type="Pfam" id="PF13853">
    <property type="entry name" value="7tm_4"/>
    <property type="match status" value="1"/>
</dbReference>
<dbReference type="PRINTS" id="PR00237">
    <property type="entry name" value="GPCRRHODOPSN"/>
</dbReference>
<dbReference type="PRINTS" id="PR00245">
    <property type="entry name" value="OLFACTORYR"/>
</dbReference>
<dbReference type="SUPFAM" id="SSF81321">
    <property type="entry name" value="Family A G protein-coupled receptor-like"/>
    <property type="match status" value="1"/>
</dbReference>
<dbReference type="PROSITE" id="PS50262">
    <property type="entry name" value="G_PROTEIN_RECEP_F1_2"/>
    <property type="match status" value="1"/>
</dbReference>
<comment type="function">
    <text evidence="3">Odorant receptor.</text>
</comment>
<comment type="subcellular location">
    <subcellularLocation>
        <location evidence="1">Membrane</location>
        <topology evidence="1">Multi-pass membrane protein</topology>
    </subcellularLocation>
</comment>
<comment type="similarity">
    <text evidence="2">Belongs to the G-protein coupled receptor 1 family.</text>
</comment>
<feature type="chain" id="PRO_0000451613" description="Olfactory receptor 4M2">
    <location>
        <begin position="1"/>
        <end position="313"/>
    </location>
</feature>
<feature type="topological domain" description="Cytoplasmic" evidence="3">
    <location>
        <begin position="1"/>
        <end position="25"/>
    </location>
</feature>
<feature type="transmembrane region" description="Helical; Name=1" evidence="1">
    <location>
        <begin position="26"/>
        <end position="46"/>
    </location>
</feature>
<feature type="topological domain" description="Extracellular" evidence="3">
    <location>
        <begin position="47"/>
        <end position="57"/>
    </location>
</feature>
<feature type="transmembrane region" description="Helical; Name=2" evidence="1">
    <location>
        <begin position="58"/>
        <end position="78"/>
    </location>
</feature>
<feature type="topological domain" description="Cytoplasmic" evidence="3">
    <location>
        <begin position="79"/>
        <end position="97"/>
    </location>
</feature>
<feature type="transmembrane region" description="Helical; Name=3" evidence="1">
    <location>
        <begin position="98"/>
        <end position="118"/>
    </location>
</feature>
<feature type="topological domain" description="Extracellular" evidence="3">
    <location>
        <begin position="119"/>
        <end position="142"/>
    </location>
</feature>
<feature type="transmembrane region" description="Helical; Name=4" evidence="1">
    <location>
        <begin position="143"/>
        <end position="163"/>
    </location>
</feature>
<feature type="topological domain" description="Cytoplasmic" evidence="3">
    <location>
        <begin position="164"/>
        <end position="204"/>
    </location>
</feature>
<feature type="transmembrane region" description="Helical; Name=5" evidence="1">
    <location>
        <begin position="205"/>
        <end position="225"/>
    </location>
</feature>
<feature type="topological domain" description="Extracellular" evidence="3">
    <location>
        <begin position="226"/>
        <end position="238"/>
    </location>
</feature>
<feature type="transmembrane region" description="Helical; Name=6" evidence="1">
    <location>
        <begin position="239"/>
        <end position="259"/>
    </location>
</feature>
<feature type="topological domain" description="Cytoplasmic" evidence="3">
    <location>
        <begin position="260"/>
        <end position="270"/>
    </location>
</feature>
<feature type="transmembrane region" description="Helical; Name=7" evidence="1">
    <location>
        <begin position="271"/>
        <end position="291"/>
    </location>
</feature>
<feature type="topological domain" description="Extracellular" evidence="3">
    <location>
        <begin position="292"/>
        <end position="313"/>
    </location>
</feature>
<feature type="disulfide bond" evidence="2">
    <location>
        <begin position="97"/>
        <end position="179"/>
    </location>
</feature>
<protein>
    <recommendedName>
        <fullName evidence="3">Olfactory receptor 4M2</fullName>
    </recommendedName>
</protein>
<evidence type="ECO:0000255" key="1"/>
<evidence type="ECO:0000255" key="2">
    <source>
        <dbReference type="PROSITE-ProRule" id="PRU00521"/>
    </source>
</evidence>
<evidence type="ECO:0000305" key="3"/>
<evidence type="ECO:0000312" key="4">
    <source>
        <dbReference type="HGNC" id="HGNC:55109"/>
    </source>
</evidence>
<accession>A0A0X1KG70</accession>